<name>EFG2_BURL3</name>
<gene>
    <name evidence="1" type="primary">fusA2</name>
    <name type="ordered locus">Bcep18194_A5860</name>
</gene>
<keyword id="KW-0963">Cytoplasm</keyword>
<keyword id="KW-0251">Elongation factor</keyword>
<keyword id="KW-0342">GTP-binding</keyword>
<keyword id="KW-0547">Nucleotide-binding</keyword>
<keyword id="KW-0648">Protein biosynthesis</keyword>
<sequence>MPRKTPIERYRNIGISAHIDAGKTTTTERILFYTGVSHKIGEVHDGAATMDWMEQEQERGITITSAATTAFWKGMAGNYPEHRINIIDTPGHVDFTIEVERSMRVLDGACMVYDSVGGVQPQSETVWRQANKYKVPRIAFVNKMDRIGADFFRVQKQIGERLKGVAVPIQIPIGAEDHFQGVVDLVKMKAIVWDDESQGVKFTYEDIPANLAELAHEWREKMVEAAAEASEELLEKYLHDHESLTEDEIKAALRKRTIANEIVPMLCGSAFKNKGVQAMLDAVIDYLPSPADVPAILGHDLHDKEAERHPNDEDPFSSLAFKIMTDPFVGQLIFFRVYSGVVESGDTVLNATKDKKERLGRILQMHANERKEIKEVRAGDIAAAVGLKEATTGDTLCDPAHPIVLERMIFPEPVISQAVEPKTKADQEKMGLALNRLAQEDPSFRVQTDEESGQTIISGMGELHLEILVDRMKREFGVEATVGKPQVAYRETVRTPAKDVEGKFVKQSGGRGQYGHAVITLEPNPGKGYEFVDAIKGGVIPREYIPSVDKGIQETLKSGVLAGYPVVDVKVTLTFGSYHDVDSNENAFRMAGSMAFKEAMRRAKPVLLEPMMAVEVETPEDFMGNVMGDLSSRRGIVQGMEDIAGGGGKLVRAEVPLAEMFGYSTSLRSATQGRATYTMEFKQYAETPANVSEGVISAKVK</sequence>
<reference key="1">
    <citation type="submission" date="2005-10" db="EMBL/GenBank/DDBJ databases">
        <title>Complete sequence of chromosome 1 of Burkholderia sp. 383.</title>
        <authorList>
            <consortium name="US DOE Joint Genome Institute"/>
            <person name="Copeland A."/>
            <person name="Lucas S."/>
            <person name="Lapidus A."/>
            <person name="Barry K."/>
            <person name="Detter J.C."/>
            <person name="Glavina T."/>
            <person name="Hammon N."/>
            <person name="Israni S."/>
            <person name="Pitluck S."/>
            <person name="Chain P."/>
            <person name="Malfatti S."/>
            <person name="Shin M."/>
            <person name="Vergez L."/>
            <person name="Schmutz J."/>
            <person name="Larimer F."/>
            <person name="Land M."/>
            <person name="Kyrpides N."/>
            <person name="Lykidis A."/>
            <person name="Richardson P."/>
        </authorList>
    </citation>
    <scope>NUCLEOTIDE SEQUENCE [LARGE SCALE GENOMIC DNA]</scope>
    <source>
        <strain>ATCC 17760 / DSM 23089 / LMG 22485 / NCIMB 9086 / R18194 / 383</strain>
    </source>
</reference>
<dbReference type="EMBL" id="CP000151">
    <property type="protein sequence ID" value="ABB09454.1"/>
    <property type="molecule type" value="Genomic_DNA"/>
</dbReference>
<dbReference type="RefSeq" id="WP_011352972.1">
    <property type="nucleotide sequence ID" value="NC_007510.1"/>
</dbReference>
<dbReference type="SMR" id="Q39DL2"/>
<dbReference type="GeneID" id="45095744"/>
<dbReference type="KEGG" id="bur:Bcep18194_A5860"/>
<dbReference type="PATRIC" id="fig|482957.22.peg.2848"/>
<dbReference type="HOGENOM" id="CLU_002794_4_1_4"/>
<dbReference type="Proteomes" id="UP000002705">
    <property type="component" value="Chromosome 1"/>
</dbReference>
<dbReference type="GO" id="GO:0005737">
    <property type="term" value="C:cytoplasm"/>
    <property type="evidence" value="ECO:0007669"/>
    <property type="project" value="UniProtKB-SubCell"/>
</dbReference>
<dbReference type="GO" id="GO:0005525">
    <property type="term" value="F:GTP binding"/>
    <property type="evidence" value="ECO:0007669"/>
    <property type="project" value="UniProtKB-UniRule"/>
</dbReference>
<dbReference type="GO" id="GO:0003924">
    <property type="term" value="F:GTPase activity"/>
    <property type="evidence" value="ECO:0007669"/>
    <property type="project" value="InterPro"/>
</dbReference>
<dbReference type="GO" id="GO:0097216">
    <property type="term" value="F:guanosine tetraphosphate binding"/>
    <property type="evidence" value="ECO:0007669"/>
    <property type="project" value="UniProtKB-ARBA"/>
</dbReference>
<dbReference type="GO" id="GO:0003746">
    <property type="term" value="F:translation elongation factor activity"/>
    <property type="evidence" value="ECO:0007669"/>
    <property type="project" value="UniProtKB-UniRule"/>
</dbReference>
<dbReference type="GO" id="GO:0032790">
    <property type="term" value="P:ribosome disassembly"/>
    <property type="evidence" value="ECO:0007669"/>
    <property type="project" value="TreeGrafter"/>
</dbReference>
<dbReference type="CDD" id="cd01886">
    <property type="entry name" value="EF-G"/>
    <property type="match status" value="1"/>
</dbReference>
<dbReference type="CDD" id="cd16262">
    <property type="entry name" value="EFG_III"/>
    <property type="match status" value="1"/>
</dbReference>
<dbReference type="CDD" id="cd01434">
    <property type="entry name" value="EFG_mtEFG1_IV"/>
    <property type="match status" value="1"/>
</dbReference>
<dbReference type="CDD" id="cd03713">
    <property type="entry name" value="EFG_mtEFG_C"/>
    <property type="match status" value="1"/>
</dbReference>
<dbReference type="CDD" id="cd04088">
    <property type="entry name" value="EFG_mtEFG_II"/>
    <property type="match status" value="1"/>
</dbReference>
<dbReference type="FunFam" id="2.40.30.10:FF:000006">
    <property type="entry name" value="Elongation factor G"/>
    <property type="match status" value="1"/>
</dbReference>
<dbReference type="FunFam" id="3.30.230.10:FF:000003">
    <property type="entry name" value="Elongation factor G"/>
    <property type="match status" value="1"/>
</dbReference>
<dbReference type="FunFam" id="3.30.70.240:FF:000001">
    <property type="entry name" value="Elongation factor G"/>
    <property type="match status" value="1"/>
</dbReference>
<dbReference type="FunFam" id="3.30.70.870:FF:000001">
    <property type="entry name" value="Elongation factor G"/>
    <property type="match status" value="1"/>
</dbReference>
<dbReference type="FunFam" id="3.40.50.300:FF:000029">
    <property type="entry name" value="Elongation factor G"/>
    <property type="match status" value="1"/>
</dbReference>
<dbReference type="Gene3D" id="3.30.230.10">
    <property type="match status" value="1"/>
</dbReference>
<dbReference type="Gene3D" id="3.30.70.240">
    <property type="match status" value="1"/>
</dbReference>
<dbReference type="Gene3D" id="3.30.70.870">
    <property type="entry name" value="Elongation Factor G (Translational Gtpase), domain 3"/>
    <property type="match status" value="1"/>
</dbReference>
<dbReference type="Gene3D" id="3.40.50.300">
    <property type="entry name" value="P-loop containing nucleotide triphosphate hydrolases"/>
    <property type="match status" value="1"/>
</dbReference>
<dbReference type="Gene3D" id="2.40.30.10">
    <property type="entry name" value="Translation factors"/>
    <property type="match status" value="1"/>
</dbReference>
<dbReference type="HAMAP" id="MF_00054_B">
    <property type="entry name" value="EF_G_EF_2_B"/>
    <property type="match status" value="1"/>
</dbReference>
<dbReference type="InterPro" id="IPR041095">
    <property type="entry name" value="EFG_II"/>
</dbReference>
<dbReference type="InterPro" id="IPR009022">
    <property type="entry name" value="EFG_III"/>
</dbReference>
<dbReference type="InterPro" id="IPR035647">
    <property type="entry name" value="EFG_III/V"/>
</dbReference>
<dbReference type="InterPro" id="IPR047872">
    <property type="entry name" value="EFG_IV"/>
</dbReference>
<dbReference type="InterPro" id="IPR035649">
    <property type="entry name" value="EFG_V"/>
</dbReference>
<dbReference type="InterPro" id="IPR000640">
    <property type="entry name" value="EFG_V-like"/>
</dbReference>
<dbReference type="InterPro" id="IPR004161">
    <property type="entry name" value="EFTu-like_2"/>
</dbReference>
<dbReference type="InterPro" id="IPR031157">
    <property type="entry name" value="G_TR_CS"/>
</dbReference>
<dbReference type="InterPro" id="IPR027417">
    <property type="entry name" value="P-loop_NTPase"/>
</dbReference>
<dbReference type="InterPro" id="IPR020568">
    <property type="entry name" value="Ribosomal_Su5_D2-typ_SF"/>
</dbReference>
<dbReference type="InterPro" id="IPR014721">
    <property type="entry name" value="Ribsml_uS5_D2-typ_fold_subgr"/>
</dbReference>
<dbReference type="InterPro" id="IPR005225">
    <property type="entry name" value="Small_GTP-bd"/>
</dbReference>
<dbReference type="InterPro" id="IPR000795">
    <property type="entry name" value="T_Tr_GTP-bd_dom"/>
</dbReference>
<dbReference type="InterPro" id="IPR009000">
    <property type="entry name" value="Transl_B-barrel_sf"/>
</dbReference>
<dbReference type="InterPro" id="IPR004540">
    <property type="entry name" value="Transl_elong_EFG/EF2"/>
</dbReference>
<dbReference type="InterPro" id="IPR005517">
    <property type="entry name" value="Transl_elong_EFG/EF2_IV"/>
</dbReference>
<dbReference type="NCBIfam" id="TIGR00484">
    <property type="entry name" value="EF-G"/>
    <property type="match status" value="1"/>
</dbReference>
<dbReference type="NCBIfam" id="NF009381">
    <property type="entry name" value="PRK12740.1-5"/>
    <property type="match status" value="1"/>
</dbReference>
<dbReference type="NCBIfam" id="TIGR00231">
    <property type="entry name" value="small_GTP"/>
    <property type="match status" value="1"/>
</dbReference>
<dbReference type="PANTHER" id="PTHR43261:SF1">
    <property type="entry name" value="RIBOSOME-RELEASING FACTOR 2, MITOCHONDRIAL"/>
    <property type="match status" value="1"/>
</dbReference>
<dbReference type="PANTHER" id="PTHR43261">
    <property type="entry name" value="TRANSLATION ELONGATION FACTOR G-RELATED"/>
    <property type="match status" value="1"/>
</dbReference>
<dbReference type="Pfam" id="PF00679">
    <property type="entry name" value="EFG_C"/>
    <property type="match status" value="1"/>
</dbReference>
<dbReference type="Pfam" id="PF14492">
    <property type="entry name" value="EFG_III"/>
    <property type="match status" value="1"/>
</dbReference>
<dbReference type="Pfam" id="PF03764">
    <property type="entry name" value="EFG_IV"/>
    <property type="match status" value="1"/>
</dbReference>
<dbReference type="Pfam" id="PF00009">
    <property type="entry name" value="GTP_EFTU"/>
    <property type="match status" value="1"/>
</dbReference>
<dbReference type="Pfam" id="PF03144">
    <property type="entry name" value="GTP_EFTU_D2"/>
    <property type="match status" value="1"/>
</dbReference>
<dbReference type="PRINTS" id="PR00315">
    <property type="entry name" value="ELONGATNFCT"/>
</dbReference>
<dbReference type="SMART" id="SM00838">
    <property type="entry name" value="EFG_C"/>
    <property type="match status" value="1"/>
</dbReference>
<dbReference type="SMART" id="SM00889">
    <property type="entry name" value="EFG_IV"/>
    <property type="match status" value="1"/>
</dbReference>
<dbReference type="SUPFAM" id="SSF54980">
    <property type="entry name" value="EF-G C-terminal domain-like"/>
    <property type="match status" value="2"/>
</dbReference>
<dbReference type="SUPFAM" id="SSF52540">
    <property type="entry name" value="P-loop containing nucleoside triphosphate hydrolases"/>
    <property type="match status" value="1"/>
</dbReference>
<dbReference type="SUPFAM" id="SSF54211">
    <property type="entry name" value="Ribosomal protein S5 domain 2-like"/>
    <property type="match status" value="1"/>
</dbReference>
<dbReference type="SUPFAM" id="SSF50447">
    <property type="entry name" value="Translation proteins"/>
    <property type="match status" value="1"/>
</dbReference>
<dbReference type="PROSITE" id="PS00301">
    <property type="entry name" value="G_TR_1"/>
    <property type="match status" value="1"/>
</dbReference>
<dbReference type="PROSITE" id="PS51722">
    <property type="entry name" value="G_TR_2"/>
    <property type="match status" value="1"/>
</dbReference>
<accession>Q39DL2</accession>
<evidence type="ECO:0000255" key="1">
    <source>
        <dbReference type="HAMAP-Rule" id="MF_00054"/>
    </source>
</evidence>
<comment type="function">
    <text evidence="1">Catalyzes the GTP-dependent ribosomal translocation step during translation elongation. During this step, the ribosome changes from the pre-translocational (PRE) to the post-translocational (POST) state as the newly formed A-site-bound peptidyl-tRNA and P-site-bound deacylated tRNA move to the P and E sites, respectively. Catalyzes the coordinated movement of the two tRNA molecules, the mRNA and conformational changes in the ribosome.</text>
</comment>
<comment type="subcellular location">
    <subcellularLocation>
        <location evidence="1">Cytoplasm</location>
    </subcellularLocation>
</comment>
<comment type="similarity">
    <text evidence="1">Belongs to the TRAFAC class translation factor GTPase superfamily. Classic translation factor GTPase family. EF-G/EF-2 subfamily.</text>
</comment>
<feature type="chain" id="PRO_0000225199" description="Elongation factor G 2">
    <location>
        <begin position="1"/>
        <end position="701"/>
    </location>
</feature>
<feature type="domain" description="tr-type G">
    <location>
        <begin position="8"/>
        <end position="291"/>
    </location>
</feature>
<feature type="binding site" evidence="1">
    <location>
        <begin position="17"/>
        <end position="24"/>
    </location>
    <ligand>
        <name>GTP</name>
        <dbReference type="ChEBI" id="CHEBI:37565"/>
    </ligand>
</feature>
<feature type="binding site" evidence="1">
    <location>
        <begin position="88"/>
        <end position="92"/>
    </location>
    <ligand>
        <name>GTP</name>
        <dbReference type="ChEBI" id="CHEBI:37565"/>
    </ligand>
</feature>
<feature type="binding site" evidence="1">
    <location>
        <begin position="142"/>
        <end position="145"/>
    </location>
    <ligand>
        <name>GTP</name>
        <dbReference type="ChEBI" id="CHEBI:37565"/>
    </ligand>
</feature>
<proteinExistence type="inferred from homology"/>
<organism>
    <name type="scientific">Burkholderia lata (strain ATCC 17760 / DSM 23089 / LMG 22485 / NCIMB 9086 / R18194 / 383)</name>
    <dbReference type="NCBI Taxonomy" id="482957"/>
    <lineage>
        <taxon>Bacteria</taxon>
        <taxon>Pseudomonadati</taxon>
        <taxon>Pseudomonadota</taxon>
        <taxon>Betaproteobacteria</taxon>
        <taxon>Burkholderiales</taxon>
        <taxon>Burkholderiaceae</taxon>
        <taxon>Burkholderia</taxon>
        <taxon>Burkholderia cepacia complex</taxon>
    </lineage>
</organism>
<protein>
    <recommendedName>
        <fullName evidence="1">Elongation factor G 2</fullName>
        <shortName evidence="1">EF-G 2</shortName>
    </recommendedName>
</protein>